<comment type="function">
    <text evidence="2">3'-to-5' exoribonuclease specific for small oligoribonucleotides.</text>
</comment>
<comment type="subcellular location">
    <subcellularLocation>
        <location evidence="2">Cytoplasm</location>
    </subcellularLocation>
</comment>
<comment type="similarity">
    <text evidence="2">Belongs to the oligoribonuclease family.</text>
</comment>
<comment type="sequence caution" evidence="3">
    <conflict type="erroneous initiation">
        <sequence resource="EMBL-CDS" id="AAN45737"/>
    </conflict>
    <text>Extended N-terminus.</text>
</comment>
<comment type="sequence caution" evidence="3">
    <conflict type="erroneous initiation">
        <sequence resource="EMBL-CDS" id="AAP19520"/>
    </conflict>
    <text>Extended N-terminus.</text>
</comment>
<proteinExistence type="inferred from homology"/>
<protein>
    <recommendedName>
        <fullName evidence="2">Oligoribonuclease</fullName>
        <ecNumber evidence="2">3.1.15.-</ecNumber>
    </recommendedName>
</protein>
<organism>
    <name type="scientific">Shigella flexneri</name>
    <dbReference type="NCBI Taxonomy" id="623"/>
    <lineage>
        <taxon>Bacteria</taxon>
        <taxon>Pseudomonadati</taxon>
        <taxon>Pseudomonadota</taxon>
        <taxon>Gammaproteobacteria</taxon>
        <taxon>Enterobacterales</taxon>
        <taxon>Enterobacteriaceae</taxon>
        <taxon>Shigella</taxon>
    </lineage>
</organism>
<accession>Q83IJ9</accession>
<accession>Q7UAL4</accession>
<sequence length="181" mass="20844">MSANENNLIWIDLEMTGLDPERDRIIEIATLVTDANLNILAEGPTIAVHQSDEQLALMDDWNVRTHTASGLVERVKASTMGDREAELATLEFLKQWVPAGKSPICGNSIGQDRRFLFKYMPELEVYFHYRYLDVSTLKELARRWKPEILDGFTKQGTHQAMDDIRESVAELAYYREHFIKL</sequence>
<dbReference type="EC" id="3.1.15.-" evidence="2"/>
<dbReference type="EMBL" id="AE005674">
    <property type="protein sequence ID" value="AAN45737.2"/>
    <property type="status" value="ALT_INIT"/>
    <property type="molecule type" value="Genomic_DNA"/>
</dbReference>
<dbReference type="EMBL" id="AE014073">
    <property type="protein sequence ID" value="AAP19520.1"/>
    <property type="status" value="ALT_INIT"/>
    <property type="molecule type" value="Genomic_DNA"/>
</dbReference>
<dbReference type="RefSeq" id="WP_005053889.1">
    <property type="nucleotide sequence ID" value="NZ_WPGW01000048.1"/>
</dbReference>
<dbReference type="SMR" id="Q83IJ9"/>
<dbReference type="STRING" id="198214.SF4319"/>
<dbReference type="PaxDb" id="198214-SF4319"/>
<dbReference type="KEGG" id="sfl:SF4319"/>
<dbReference type="KEGG" id="sfx:S4584"/>
<dbReference type="PATRIC" id="fig|198214.7.peg.5094"/>
<dbReference type="HOGENOM" id="CLU_064761_2_0_6"/>
<dbReference type="Proteomes" id="UP000001006">
    <property type="component" value="Chromosome"/>
</dbReference>
<dbReference type="Proteomes" id="UP000002673">
    <property type="component" value="Chromosome"/>
</dbReference>
<dbReference type="GO" id="GO:0005737">
    <property type="term" value="C:cytoplasm"/>
    <property type="evidence" value="ECO:0007669"/>
    <property type="project" value="UniProtKB-SubCell"/>
</dbReference>
<dbReference type="GO" id="GO:0000175">
    <property type="term" value="F:3'-5'-RNA exonuclease activity"/>
    <property type="evidence" value="ECO:0007669"/>
    <property type="project" value="InterPro"/>
</dbReference>
<dbReference type="GO" id="GO:0003676">
    <property type="term" value="F:nucleic acid binding"/>
    <property type="evidence" value="ECO:0007669"/>
    <property type="project" value="InterPro"/>
</dbReference>
<dbReference type="GO" id="GO:0006259">
    <property type="term" value="P:DNA metabolic process"/>
    <property type="evidence" value="ECO:0007669"/>
    <property type="project" value="UniProtKB-ARBA"/>
</dbReference>
<dbReference type="CDD" id="cd06135">
    <property type="entry name" value="Orn"/>
    <property type="match status" value="1"/>
</dbReference>
<dbReference type="FunFam" id="3.30.420.10:FF:000003">
    <property type="entry name" value="Oligoribonuclease"/>
    <property type="match status" value="1"/>
</dbReference>
<dbReference type="Gene3D" id="3.30.420.10">
    <property type="entry name" value="Ribonuclease H-like superfamily/Ribonuclease H"/>
    <property type="match status" value="1"/>
</dbReference>
<dbReference type="HAMAP" id="MF_00045">
    <property type="entry name" value="Oligoribonuclease"/>
    <property type="match status" value="1"/>
</dbReference>
<dbReference type="InterPro" id="IPR013520">
    <property type="entry name" value="Exonuclease_RNaseT/DNA_pol3"/>
</dbReference>
<dbReference type="InterPro" id="IPR022894">
    <property type="entry name" value="Oligoribonuclease"/>
</dbReference>
<dbReference type="InterPro" id="IPR012337">
    <property type="entry name" value="RNaseH-like_sf"/>
</dbReference>
<dbReference type="InterPro" id="IPR036397">
    <property type="entry name" value="RNaseH_sf"/>
</dbReference>
<dbReference type="NCBIfam" id="NF003765">
    <property type="entry name" value="PRK05359.1"/>
    <property type="match status" value="1"/>
</dbReference>
<dbReference type="PANTHER" id="PTHR11046">
    <property type="entry name" value="OLIGORIBONUCLEASE, MITOCHONDRIAL"/>
    <property type="match status" value="1"/>
</dbReference>
<dbReference type="PANTHER" id="PTHR11046:SF0">
    <property type="entry name" value="OLIGORIBONUCLEASE, MITOCHONDRIAL"/>
    <property type="match status" value="1"/>
</dbReference>
<dbReference type="Pfam" id="PF00929">
    <property type="entry name" value="RNase_T"/>
    <property type="match status" value="1"/>
</dbReference>
<dbReference type="SMART" id="SM00479">
    <property type="entry name" value="EXOIII"/>
    <property type="match status" value="1"/>
</dbReference>
<dbReference type="SUPFAM" id="SSF53098">
    <property type="entry name" value="Ribonuclease H-like"/>
    <property type="match status" value="1"/>
</dbReference>
<feature type="initiator methionine" description="Removed" evidence="1">
    <location>
        <position position="1"/>
    </location>
</feature>
<feature type="chain" id="PRO_0000111071" description="Oligoribonuclease">
    <location>
        <begin position="2"/>
        <end position="181"/>
    </location>
</feature>
<feature type="domain" description="Exonuclease" evidence="2">
    <location>
        <begin position="8"/>
        <end position="171"/>
    </location>
</feature>
<feature type="active site" evidence="2">
    <location>
        <position position="129"/>
    </location>
</feature>
<evidence type="ECO:0000250" key="1"/>
<evidence type="ECO:0000255" key="2">
    <source>
        <dbReference type="HAMAP-Rule" id="MF_00045"/>
    </source>
</evidence>
<evidence type="ECO:0000305" key="3"/>
<reference key="1">
    <citation type="journal article" date="2002" name="Nucleic Acids Res.">
        <title>Genome sequence of Shigella flexneri 2a: insights into pathogenicity through comparison with genomes of Escherichia coli K12 and O157.</title>
        <authorList>
            <person name="Jin Q."/>
            <person name="Yuan Z."/>
            <person name="Xu J."/>
            <person name="Wang Y."/>
            <person name="Shen Y."/>
            <person name="Lu W."/>
            <person name="Wang J."/>
            <person name="Liu H."/>
            <person name="Yang J."/>
            <person name="Yang F."/>
            <person name="Zhang X."/>
            <person name="Zhang J."/>
            <person name="Yang G."/>
            <person name="Wu H."/>
            <person name="Qu D."/>
            <person name="Dong J."/>
            <person name="Sun L."/>
            <person name="Xue Y."/>
            <person name="Zhao A."/>
            <person name="Gao Y."/>
            <person name="Zhu J."/>
            <person name="Kan B."/>
            <person name="Ding K."/>
            <person name="Chen S."/>
            <person name="Cheng H."/>
            <person name="Yao Z."/>
            <person name="He B."/>
            <person name="Chen R."/>
            <person name="Ma D."/>
            <person name="Qiang B."/>
            <person name="Wen Y."/>
            <person name="Hou Y."/>
            <person name="Yu J."/>
        </authorList>
    </citation>
    <scope>NUCLEOTIDE SEQUENCE [LARGE SCALE GENOMIC DNA]</scope>
    <source>
        <strain>301 / Serotype 2a</strain>
    </source>
</reference>
<reference key="2">
    <citation type="journal article" date="2003" name="Infect. Immun.">
        <title>Complete genome sequence and comparative genomics of Shigella flexneri serotype 2a strain 2457T.</title>
        <authorList>
            <person name="Wei J."/>
            <person name="Goldberg M.B."/>
            <person name="Burland V."/>
            <person name="Venkatesan M.M."/>
            <person name="Deng W."/>
            <person name="Fournier G."/>
            <person name="Mayhew G.F."/>
            <person name="Plunkett G. III"/>
            <person name="Rose D.J."/>
            <person name="Darling A."/>
            <person name="Mau B."/>
            <person name="Perna N.T."/>
            <person name="Payne S.M."/>
            <person name="Runyen-Janecky L.J."/>
            <person name="Zhou S."/>
            <person name="Schwartz D.C."/>
            <person name="Blattner F.R."/>
        </authorList>
    </citation>
    <scope>NUCLEOTIDE SEQUENCE [LARGE SCALE GENOMIC DNA]</scope>
    <source>
        <strain>ATCC 700930 / 2457T / Serotype 2a</strain>
    </source>
</reference>
<keyword id="KW-0963">Cytoplasm</keyword>
<keyword id="KW-0269">Exonuclease</keyword>
<keyword id="KW-0378">Hydrolase</keyword>
<keyword id="KW-0540">Nuclease</keyword>
<keyword id="KW-1185">Reference proteome</keyword>
<gene>
    <name evidence="2" type="primary">orn</name>
    <name type="ordered locus">SF4319</name>
    <name type="ordered locus">S4584</name>
</gene>
<name>ORN_SHIFL</name>